<protein>
    <recommendedName>
        <fullName>Plastin-3</fullName>
    </recommendedName>
    <alternativeName>
        <fullName>T-plastin</fullName>
    </alternativeName>
</protein>
<name>PLST_RAT</name>
<sequence>MDEMATTQISKDELDELKEAFAKVDLNSNGFICDYELHELFKEANMPLPGYKVREIIQKLMLDGDRNKDGKISFNEFVYIFQEVKSSDIAKTFRKAINRKEGICALGGTSELSSEGTQHSYSEEEKYAFVNWINKALENDPDCRHVIPMNPNTDDLFKAVGDGIVLCKMINLSVPDTIDERAINKKKLTPFIIQENLNLALNSASAIGCHVVNIGAEDLRAGKPHLVLGLLWQIIKIGLFADIELSRNEALAALLRDGETLEELMKLSPEELLLRWANFHLENSGWQKINNFSADIKDSKAYFHLLNQIAPKGQKEGEPRIDINMSGFNETDDLKRAESMLQQADKLGCRQFVTPADVVSGNPKLNLAFVANLFNKYPALTKPENQDIDWTLLEGETREERTFRNWMNSLGVNPHVNHLYVDLQDALVILQLYERIKVPVDWSKVNKPPYPKLGANMKKLENCNYAVELGKNQAKFSLVGIGGQDLNDGNPTLTLAVVWQLMRRYTLNVMEDLGEGQKATDDIIVNWVNGTLSEAGKSTSIQSFKDKTISSSLAVVDLIDAIQPGCINYDLVKTGNLTEEDKHNNAKYAVSMARRIGARVYALPEDLVEVKPKMVMTVFACLMGRGMKSV</sequence>
<organism>
    <name type="scientific">Rattus norvegicus</name>
    <name type="common">Rat</name>
    <dbReference type="NCBI Taxonomy" id="10116"/>
    <lineage>
        <taxon>Eukaryota</taxon>
        <taxon>Metazoa</taxon>
        <taxon>Chordata</taxon>
        <taxon>Craniata</taxon>
        <taxon>Vertebrata</taxon>
        <taxon>Euteleostomi</taxon>
        <taxon>Mammalia</taxon>
        <taxon>Eutheria</taxon>
        <taxon>Euarchontoglires</taxon>
        <taxon>Glires</taxon>
        <taxon>Rodentia</taxon>
        <taxon>Myomorpha</taxon>
        <taxon>Muroidea</taxon>
        <taxon>Muridae</taxon>
        <taxon>Murinae</taxon>
        <taxon>Rattus</taxon>
    </lineage>
</organism>
<evidence type="ECO:0000250" key="1"/>
<evidence type="ECO:0000250" key="2">
    <source>
        <dbReference type="UniProtKB" id="P13797"/>
    </source>
</evidence>
<evidence type="ECO:0000255" key="3">
    <source>
        <dbReference type="PROSITE-ProRule" id="PRU00044"/>
    </source>
</evidence>
<evidence type="ECO:0000255" key="4">
    <source>
        <dbReference type="PROSITE-ProRule" id="PRU00448"/>
    </source>
</evidence>
<evidence type="ECO:0000305" key="5"/>
<evidence type="ECO:0007744" key="6">
    <source>
    </source>
</evidence>
<proteinExistence type="evidence at protein level"/>
<reference key="1">
    <citation type="submission" date="1993-01" db="EMBL/GenBank/DDBJ databases">
        <title>Nucleotide sequence of rat kidney T-plastin.</title>
        <authorList>
            <person name="Saedi M.S."/>
            <person name="Kerjaschki D."/>
            <person name="Farquhar M."/>
        </authorList>
    </citation>
    <scope>NUCLEOTIDE SEQUENCE [MRNA]</scope>
    <source>
        <tissue>Kidney</tissue>
    </source>
</reference>
<reference key="2">
    <citation type="journal article" date="2012" name="Nat. Commun.">
        <title>Quantitative maps of protein phosphorylation sites across 14 different rat organs and tissues.</title>
        <authorList>
            <person name="Lundby A."/>
            <person name="Secher A."/>
            <person name="Lage K."/>
            <person name="Nordsborg N.B."/>
            <person name="Dmytriyev A."/>
            <person name="Lundby C."/>
            <person name="Olsen J.V."/>
        </authorList>
    </citation>
    <scope>PHOSPHORYLATION [LARGE SCALE ANALYSIS] AT SER-268 AND SER-339</scope>
    <scope>IDENTIFICATION BY MASS SPECTROMETRY [LARGE SCALE ANALYSIS]</scope>
</reference>
<keyword id="KW-0009">Actin-binding</keyword>
<keyword id="KW-0106">Calcium</keyword>
<keyword id="KW-0963">Cytoplasm</keyword>
<keyword id="KW-0479">Metal-binding</keyword>
<keyword id="KW-0597">Phosphoprotein</keyword>
<keyword id="KW-1185">Reference proteome</keyword>
<keyword id="KW-0677">Repeat</keyword>
<comment type="function">
    <text>Actin-bundling protein.</text>
</comment>
<comment type="subunit">
    <text evidence="1">Monomer.</text>
</comment>
<comment type="subcellular location">
    <subcellularLocation>
        <location>Cytoplasm</location>
    </subcellularLocation>
</comment>
<comment type="sequence caution" evidence="5">
    <conflict type="erroneous initiation">
        <sequence resource="EMBL-CDS" id="CAA50037"/>
    </conflict>
</comment>
<feature type="chain" id="PRO_0000073749" description="Plastin-3">
    <location>
        <begin position="1"/>
        <end position="630"/>
    </location>
</feature>
<feature type="domain" description="EF-hand 1" evidence="4">
    <location>
        <begin position="12"/>
        <end position="47"/>
    </location>
</feature>
<feature type="domain" description="EF-hand 2" evidence="4">
    <location>
        <begin position="52"/>
        <end position="87"/>
    </location>
</feature>
<feature type="domain" description="Calponin-homology (CH) 1" evidence="3">
    <location>
        <begin position="123"/>
        <end position="239"/>
    </location>
</feature>
<feature type="domain" description="Calponin-homology (CH) 2" evidence="3">
    <location>
        <begin position="267"/>
        <end position="378"/>
    </location>
</feature>
<feature type="domain" description="Calponin-homology (CH) 3" evidence="3">
    <location>
        <begin position="397"/>
        <end position="506"/>
    </location>
</feature>
<feature type="domain" description="Calponin-homology (CH) 4" evidence="3">
    <location>
        <begin position="518"/>
        <end position="627"/>
    </location>
</feature>
<feature type="region of interest" description="Actin-binding 1">
    <location>
        <begin position="109"/>
        <end position="382"/>
    </location>
</feature>
<feature type="region of interest" description="Actin-binding 2">
    <location>
        <begin position="383"/>
        <end position="627"/>
    </location>
</feature>
<feature type="binding site" evidence="4">
    <location>
        <position position="25"/>
    </location>
    <ligand>
        <name>Ca(2+)</name>
        <dbReference type="ChEBI" id="CHEBI:29108"/>
        <label>1</label>
    </ligand>
</feature>
<feature type="binding site" evidence="4">
    <location>
        <position position="27"/>
    </location>
    <ligand>
        <name>Ca(2+)</name>
        <dbReference type="ChEBI" id="CHEBI:29108"/>
        <label>1</label>
    </ligand>
</feature>
<feature type="binding site" evidence="4">
    <location>
        <position position="29"/>
    </location>
    <ligand>
        <name>Ca(2+)</name>
        <dbReference type="ChEBI" id="CHEBI:29108"/>
        <label>1</label>
    </ligand>
</feature>
<feature type="binding site" evidence="4">
    <location>
        <position position="36"/>
    </location>
    <ligand>
        <name>Ca(2+)</name>
        <dbReference type="ChEBI" id="CHEBI:29108"/>
        <label>1</label>
    </ligand>
</feature>
<feature type="binding site" evidence="4">
    <location>
        <position position="65"/>
    </location>
    <ligand>
        <name>Ca(2+)</name>
        <dbReference type="ChEBI" id="CHEBI:29108"/>
        <label>2</label>
    </ligand>
</feature>
<feature type="binding site" evidence="4">
    <location>
        <position position="67"/>
    </location>
    <ligand>
        <name>Ca(2+)</name>
        <dbReference type="ChEBI" id="CHEBI:29108"/>
        <label>2</label>
    </ligand>
</feature>
<feature type="binding site" evidence="4">
    <location>
        <position position="69"/>
    </location>
    <ligand>
        <name>Ca(2+)</name>
        <dbReference type="ChEBI" id="CHEBI:29108"/>
        <label>2</label>
    </ligand>
</feature>
<feature type="binding site" evidence="4">
    <location>
        <position position="71"/>
    </location>
    <ligand>
        <name>Ca(2+)</name>
        <dbReference type="ChEBI" id="CHEBI:29108"/>
        <label>2</label>
    </ligand>
</feature>
<feature type="binding site" evidence="4">
    <location>
        <position position="76"/>
    </location>
    <ligand>
        <name>Ca(2+)</name>
        <dbReference type="ChEBI" id="CHEBI:29108"/>
        <label>2</label>
    </ligand>
</feature>
<feature type="modified residue" description="Phosphoserine" evidence="6">
    <location>
        <position position="268"/>
    </location>
</feature>
<feature type="modified residue" description="Phosphoserine" evidence="2">
    <location>
        <position position="293"/>
    </location>
</feature>
<feature type="modified residue" description="Phosphoserine" evidence="2">
    <location>
        <position position="326"/>
    </location>
</feature>
<feature type="modified residue" description="Phosphoserine" evidence="6">
    <location>
        <position position="339"/>
    </location>
</feature>
<feature type="modified residue" description="Phosphothreonine" evidence="2">
    <location>
        <position position="391"/>
    </location>
</feature>
<accession>Q63598</accession>
<dbReference type="EMBL" id="X70706">
    <property type="protein sequence ID" value="CAA50037.1"/>
    <property type="status" value="ALT_INIT"/>
    <property type="molecule type" value="mRNA"/>
</dbReference>
<dbReference type="PIR" id="S31765">
    <property type="entry name" value="S31765"/>
</dbReference>
<dbReference type="SMR" id="Q63598"/>
<dbReference type="FunCoup" id="Q63598">
    <property type="interactions" value="1988"/>
</dbReference>
<dbReference type="IntAct" id="Q63598">
    <property type="interactions" value="1"/>
</dbReference>
<dbReference type="STRING" id="10116.ENSRNOP00000056912"/>
<dbReference type="GlyGen" id="Q63598">
    <property type="glycosylation" value="1 site"/>
</dbReference>
<dbReference type="iPTMnet" id="Q63598"/>
<dbReference type="PhosphoSitePlus" id="Q63598"/>
<dbReference type="jPOST" id="Q63598"/>
<dbReference type="PaxDb" id="10116-ENSRNOP00000056912"/>
<dbReference type="AGR" id="RGD:621409"/>
<dbReference type="RGD" id="621409">
    <property type="gene designation" value="Pls3"/>
</dbReference>
<dbReference type="eggNOG" id="KOG0046">
    <property type="taxonomic scope" value="Eukaryota"/>
</dbReference>
<dbReference type="InParanoid" id="Q63598"/>
<dbReference type="PhylomeDB" id="Q63598"/>
<dbReference type="ChiTaRS" id="Plscr3">
    <property type="organism name" value="rat"/>
</dbReference>
<dbReference type="PRO" id="PR:Q63598"/>
<dbReference type="Proteomes" id="UP000002494">
    <property type="component" value="Unplaced"/>
</dbReference>
<dbReference type="GO" id="GO:0005884">
    <property type="term" value="C:actin filament"/>
    <property type="evidence" value="ECO:0000318"/>
    <property type="project" value="GO_Central"/>
</dbReference>
<dbReference type="GO" id="GO:0032432">
    <property type="term" value="C:actin filament bundle"/>
    <property type="evidence" value="ECO:0000318"/>
    <property type="project" value="GO_Central"/>
</dbReference>
<dbReference type="GO" id="GO:0005737">
    <property type="term" value="C:cytoplasm"/>
    <property type="evidence" value="ECO:0000266"/>
    <property type="project" value="RGD"/>
</dbReference>
<dbReference type="GO" id="GO:0031594">
    <property type="term" value="C:neuromuscular junction"/>
    <property type="evidence" value="ECO:0000266"/>
    <property type="project" value="RGD"/>
</dbReference>
<dbReference type="GO" id="GO:0032420">
    <property type="term" value="C:stereocilium"/>
    <property type="evidence" value="ECO:0000314"/>
    <property type="project" value="RGD"/>
</dbReference>
<dbReference type="GO" id="GO:0051015">
    <property type="term" value="F:actin filament binding"/>
    <property type="evidence" value="ECO:0000318"/>
    <property type="project" value="GO_Central"/>
</dbReference>
<dbReference type="GO" id="GO:0005509">
    <property type="term" value="F:calcium ion binding"/>
    <property type="evidence" value="ECO:0007669"/>
    <property type="project" value="InterPro"/>
</dbReference>
<dbReference type="GO" id="GO:0098699">
    <property type="term" value="F:structural constituent of presynaptic actin cytoskeleton"/>
    <property type="evidence" value="ECO:0000266"/>
    <property type="project" value="RGD"/>
</dbReference>
<dbReference type="GO" id="GO:0051017">
    <property type="term" value="P:actin filament bundle assembly"/>
    <property type="evidence" value="ECO:0000318"/>
    <property type="project" value="GO_Central"/>
</dbReference>
<dbReference type="GO" id="GO:0051639">
    <property type="term" value="P:actin filament network formation"/>
    <property type="evidence" value="ECO:0000318"/>
    <property type="project" value="GO_Central"/>
</dbReference>
<dbReference type="GO" id="GO:0060348">
    <property type="term" value="P:bone development"/>
    <property type="evidence" value="ECO:0000266"/>
    <property type="project" value="RGD"/>
</dbReference>
<dbReference type="GO" id="GO:0042491">
    <property type="term" value="P:inner ear auditory receptor cell differentiation"/>
    <property type="evidence" value="ECO:0000270"/>
    <property type="project" value="RGD"/>
</dbReference>
<dbReference type="GO" id="GO:0098693">
    <property type="term" value="P:regulation of synaptic vesicle cycle"/>
    <property type="evidence" value="ECO:0000266"/>
    <property type="project" value="RGD"/>
</dbReference>
<dbReference type="CDD" id="cd21328">
    <property type="entry name" value="CH_PLS3_rpt2"/>
    <property type="match status" value="1"/>
</dbReference>
<dbReference type="CDD" id="cd21331">
    <property type="entry name" value="CH_PLS3_rpt3"/>
    <property type="match status" value="1"/>
</dbReference>
<dbReference type="CDD" id="cd21334">
    <property type="entry name" value="CH_PLS3_rpt4"/>
    <property type="match status" value="1"/>
</dbReference>
<dbReference type="CDD" id="cd21292">
    <property type="entry name" value="CH_PLS_rpt1"/>
    <property type="match status" value="1"/>
</dbReference>
<dbReference type="CDD" id="cd00051">
    <property type="entry name" value="EFh"/>
    <property type="match status" value="1"/>
</dbReference>
<dbReference type="FunFam" id="1.10.238.10:FF:000059">
    <property type="entry name" value="Plastin 1"/>
    <property type="match status" value="1"/>
</dbReference>
<dbReference type="FunFam" id="1.10.418.10:FF:000010">
    <property type="entry name" value="Plastin-3 isoform 1"/>
    <property type="match status" value="1"/>
</dbReference>
<dbReference type="FunFam" id="1.10.418.10:FF:000012">
    <property type="entry name" value="Plastin-3 isoform 1"/>
    <property type="match status" value="1"/>
</dbReference>
<dbReference type="FunFam" id="1.10.418.10:FF:000014">
    <property type="entry name" value="Plastin-3 isoform 1"/>
    <property type="match status" value="1"/>
</dbReference>
<dbReference type="FunFam" id="1.10.418.10:FF:000025">
    <property type="entry name" value="Plastin-3 isoform 1"/>
    <property type="match status" value="1"/>
</dbReference>
<dbReference type="Gene3D" id="1.10.418.10">
    <property type="entry name" value="Calponin-like domain"/>
    <property type="match status" value="4"/>
</dbReference>
<dbReference type="Gene3D" id="1.10.238.10">
    <property type="entry name" value="EF-hand"/>
    <property type="match status" value="1"/>
</dbReference>
<dbReference type="InterPro" id="IPR001589">
    <property type="entry name" value="Actinin_actin-bd_CS"/>
</dbReference>
<dbReference type="InterPro" id="IPR001715">
    <property type="entry name" value="CH_dom"/>
</dbReference>
<dbReference type="InterPro" id="IPR036872">
    <property type="entry name" value="CH_dom_sf"/>
</dbReference>
<dbReference type="InterPro" id="IPR011992">
    <property type="entry name" value="EF-hand-dom_pair"/>
</dbReference>
<dbReference type="InterPro" id="IPR018247">
    <property type="entry name" value="EF_Hand_1_Ca_BS"/>
</dbReference>
<dbReference type="InterPro" id="IPR002048">
    <property type="entry name" value="EF_hand_dom"/>
</dbReference>
<dbReference type="InterPro" id="IPR039959">
    <property type="entry name" value="Fimbrin/Plastin"/>
</dbReference>
<dbReference type="PANTHER" id="PTHR19961">
    <property type="entry name" value="FIMBRIN/PLASTIN"/>
    <property type="match status" value="1"/>
</dbReference>
<dbReference type="PANTHER" id="PTHR19961:SF32">
    <property type="entry name" value="PLASTIN-3"/>
    <property type="match status" value="1"/>
</dbReference>
<dbReference type="Pfam" id="PF00307">
    <property type="entry name" value="CH"/>
    <property type="match status" value="4"/>
</dbReference>
<dbReference type="Pfam" id="PF13499">
    <property type="entry name" value="EF-hand_7"/>
    <property type="match status" value="1"/>
</dbReference>
<dbReference type="SMART" id="SM00033">
    <property type="entry name" value="CH"/>
    <property type="match status" value="4"/>
</dbReference>
<dbReference type="SMART" id="SM00054">
    <property type="entry name" value="EFh"/>
    <property type="match status" value="2"/>
</dbReference>
<dbReference type="SUPFAM" id="SSF47576">
    <property type="entry name" value="Calponin-homology domain, CH-domain"/>
    <property type="match status" value="1"/>
</dbReference>
<dbReference type="SUPFAM" id="SSF47473">
    <property type="entry name" value="EF-hand"/>
    <property type="match status" value="1"/>
</dbReference>
<dbReference type="PROSITE" id="PS00019">
    <property type="entry name" value="ACTININ_1"/>
    <property type="match status" value="2"/>
</dbReference>
<dbReference type="PROSITE" id="PS00020">
    <property type="entry name" value="ACTININ_2"/>
    <property type="match status" value="2"/>
</dbReference>
<dbReference type="PROSITE" id="PS50021">
    <property type="entry name" value="CH"/>
    <property type="match status" value="4"/>
</dbReference>
<dbReference type="PROSITE" id="PS00018">
    <property type="entry name" value="EF_HAND_1"/>
    <property type="match status" value="2"/>
</dbReference>
<dbReference type="PROSITE" id="PS50222">
    <property type="entry name" value="EF_HAND_2"/>
    <property type="match status" value="2"/>
</dbReference>
<gene>
    <name type="primary">Pls3</name>
</gene>